<gene>
    <name evidence="1" type="primary">gshA</name>
    <name type="ordered locus">PP_0243</name>
</gene>
<comment type="catalytic activity">
    <reaction evidence="1">
        <text>L-cysteine + L-glutamate + ATP = gamma-L-glutamyl-L-cysteine + ADP + phosphate + H(+)</text>
        <dbReference type="Rhea" id="RHEA:13285"/>
        <dbReference type="ChEBI" id="CHEBI:15378"/>
        <dbReference type="ChEBI" id="CHEBI:29985"/>
        <dbReference type="ChEBI" id="CHEBI:30616"/>
        <dbReference type="ChEBI" id="CHEBI:35235"/>
        <dbReference type="ChEBI" id="CHEBI:43474"/>
        <dbReference type="ChEBI" id="CHEBI:58173"/>
        <dbReference type="ChEBI" id="CHEBI:456216"/>
        <dbReference type="EC" id="6.3.2.2"/>
    </reaction>
</comment>
<comment type="pathway">
    <text evidence="1">Sulfur metabolism; glutathione biosynthesis; glutathione from L-cysteine and L-glutamate: step 1/2.</text>
</comment>
<comment type="similarity">
    <text evidence="1">Belongs to the glutamate--cysteine ligase type 1 family. Type 1 subfamily.</text>
</comment>
<keyword id="KW-0067">ATP-binding</keyword>
<keyword id="KW-0317">Glutathione biosynthesis</keyword>
<keyword id="KW-0436">Ligase</keyword>
<keyword id="KW-0547">Nucleotide-binding</keyword>
<keyword id="KW-1185">Reference proteome</keyword>
<proteinExistence type="inferred from homology"/>
<sequence>MSELLNRRLSLLGANLPLLKQCLHGIERECLRVTDEGRLAQTPHPEALGSALTNEQITTDYSESLLEFITPALADPAKVLESLEETHRFVYSKLGDEYLWSPSMPCTLPAEEDIPIAEYGSSNIGKLKHVYRKGLALRYGRTMQCIAGIHYNFSLPEALWPLLREAEGSTENDRDYQSSAYIALIRNFRRYSWLLMYLFGASPALDKGFLRGRPHQLEELDAETLFLPYATSLRMSDLGYQSNAQAGLTPCYNNLASYTDSLRKAVGTPYPPYVEIGTHVDGEWVQLNTNILQIENEYYSNIRPKRVTYTGERPIQALTSRGVQYVEVRCLDINPFLPVGIDLTEARFLDAFLLFCALEDSPQLDNGECGQCTSNFLTVVKEGRRPGLELHRNGQPISLKDWASELIGRIRQLANLLDQAQGSDEHAKALDAQQAKVDDTSLTPSAQVLARMTEHDESFVQFSLRQSRVHAETFREQPLSNEKQQAFETLARESLARQSELEQNEVGDFDLFVGAYQASILAISS</sequence>
<name>GSH1_PSEPK</name>
<organism>
    <name type="scientific">Pseudomonas putida (strain ATCC 47054 / DSM 6125 / CFBP 8728 / NCIMB 11950 / KT2440)</name>
    <dbReference type="NCBI Taxonomy" id="160488"/>
    <lineage>
        <taxon>Bacteria</taxon>
        <taxon>Pseudomonadati</taxon>
        <taxon>Pseudomonadota</taxon>
        <taxon>Gammaproteobacteria</taxon>
        <taxon>Pseudomonadales</taxon>
        <taxon>Pseudomonadaceae</taxon>
        <taxon>Pseudomonas</taxon>
    </lineage>
</organism>
<reference key="1">
    <citation type="journal article" date="2002" name="Environ. Microbiol.">
        <title>Complete genome sequence and comparative analysis of the metabolically versatile Pseudomonas putida KT2440.</title>
        <authorList>
            <person name="Nelson K.E."/>
            <person name="Weinel C."/>
            <person name="Paulsen I.T."/>
            <person name="Dodson R.J."/>
            <person name="Hilbert H."/>
            <person name="Martins dos Santos V.A.P."/>
            <person name="Fouts D.E."/>
            <person name="Gill S.R."/>
            <person name="Pop M."/>
            <person name="Holmes M."/>
            <person name="Brinkac L.M."/>
            <person name="Beanan M.J."/>
            <person name="DeBoy R.T."/>
            <person name="Daugherty S.C."/>
            <person name="Kolonay J.F."/>
            <person name="Madupu R."/>
            <person name="Nelson W.C."/>
            <person name="White O."/>
            <person name="Peterson J.D."/>
            <person name="Khouri H.M."/>
            <person name="Hance I."/>
            <person name="Chris Lee P."/>
            <person name="Holtzapple E.K."/>
            <person name="Scanlan D."/>
            <person name="Tran K."/>
            <person name="Moazzez A."/>
            <person name="Utterback T.R."/>
            <person name="Rizzo M."/>
            <person name="Lee K."/>
            <person name="Kosack D."/>
            <person name="Moestl D."/>
            <person name="Wedler H."/>
            <person name="Lauber J."/>
            <person name="Stjepandic D."/>
            <person name="Hoheisel J."/>
            <person name="Straetz M."/>
            <person name="Heim S."/>
            <person name="Kiewitz C."/>
            <person name="Eisen J.A."/>
            <person name="Timmis K.N."/>
            <person name="Duesterhoeft A."/>
            <person name="Tuemmler B."/>
            <person name="Fraser C.M."/>
        </authorList>
    </citation>
    <scope>NUCLEOTIDE SEQUENCE [LARGE SCALE GENOMIC DNA]</scope>
    <source>
        <strain>ATCC 47054 / DSM 6125 / CFBP 8728 / NCIMB 11950 / KT2440</strain>
    </source>
</reference>
<accession>Q88R90</accession>
<dbReference type="EC" id="6.3.2.2" evidence="1"/>
<dbReference type="EMBL" id="AE015451">
    <property type="protein sequence ID" value="AAN65875.1"/>
    <property type="molecule type" value="Genomic_DNA"/>
</dbReference>
<dbReference type="RefSeq" id="NP_742411.1">
    <property type="nucleotide sequence ID" value="NC_002947.4"/>
</dbReference>
<dbReference type="SMR" id="Q88R90"/>
<dbReference type="STRING" id="160488.PP_0243"/>
<dbReference type="PaxDb" id="160488-PP_0243"/>
<dbReference type="KEGG" id="ppu:PP_0243"/>
<dbReference type="PATRIC" id="fig|160488.4.peg.259"/>
<dbReference type="eggNOG" id="COG2918">
    <property type="taxonomic scope" value="Bacteria"/>
</dbReference>
<dbReference type="HOGENOM" id="CLU_020728_3_0_6"/>
<dbReference type="OrthoDB" id="9803907at2"/>
<dbReference type="PhylomeDB" id="Q88R90"/>
<dbReference type="BioCyc" id="PPUT160488:G1G01-265-MONOMER"/>
<dbReference type="UniPathway" id="UPA00142">
    <property type="reaction ID" value="UER00209"/>
</dbReference>
<dbReference type="Proteomes" id="UP000000556">
    <property type="component" value="Chromosome"/>
</dbReference>
<dbReference type="GO" id="GO:0005829">
    <property type="term" value="C:cytosol"/>
    <property type="evidence" value="ECO:0007669"/>
    <property type="project" value="TreeGrafter"/>
</dbReference>
<dbReference type="GO" id="GO:0005524">
    <property type="term" value="F:ATP binding"/>
    <property type="evidence" value="ECO:0007669"/>
    <property type="project" value="UniProtKB-KW"/>
</dbReference>
<dbReference type="GO" id="GO:0004357">
    <property type="term" value="F:glutamate-cysteine ligase activity"/>
    <property type="evidence" value="ECO:0007669"/>
    <property type="project" value="UniProtKB-UniRule"/>
</dbReference>
<dbReference type="GO" id="GO:0046872">
    <property type="term" value="F:metal ion binding"/>
    <property type="evidence" value="ECO:0007669"/>
    <property type="project" value="TreeGrafter"/>
</dbReference>
<dbReference type="GO" id="GO:0006750">
    <property type="term" value="P:glutathione biosynthetic process"/>
    <property type="evidence" value="ECO:0007669"/>
    <property type="project" value="UniProtKB-UniRule"/>
</dbReference>
<dbReference type="Gene3D" id="3.30.590.20">
    <property type="match status" value="1"/>
</dbReference>
<dbReference type="HAMAP" id="MF_00578">
    <property type="entry name" value="Glu_cys_ligase"/>
    <property type="match status" value="1"/>
</dbReference>
<dbReference type="InterPro" id="IPR014746">
    <property type="entry name" value="Gln_synth/guanido_kin_cat_dom"/>
</dbReference>
<dbReference type="InterPro" id="IPR007370">
    <property type="entry name" value="Glu_cys_ligase"/>
</dbReference>
<dbReference type="InterPro" id="IPR006334">
    <property type="entry name" value="Glut_cys_ligase"/>
</dbReference>
<dbReference type="NCBIfam" id="TIGR01434">
    <property type="entry name" value="glu_cys_ligase"/>
    <property type="match status" value="1"/>
</dbReference>
<dbReference type="PANTHER" id="PTHR38761">
    <property type="entry name" value="GLUTAMATE--CYSTEINE LIGASE"/>
    <property type="match status" value="1"/>
</dbReference>
<dbReference type="PANTHER" id="PTHR38761:SF1">
    <property type="entry name" value="GLUTAMATE--CYSTEINE LIGASE"/>
    <property type="match status" value="1"/>
</dbReference>
<dbReference type="Pfam" id="PF04262">
    <property type="entry name" value="Glu_cys_ligase"/>
    <property type="match status" value="1"/>
</dbReference>
<dbReference type="SUPFAM" id="SSF55931">
    <property type="entry name" value="Glutamine synthetase/guanido kinase"/>
    <property type="match status" value="1"/>
</dbReference>
<evidence type="ECO:0000255" key="1">
    <source>
        <dbReference type="HAMAP-Rule" id="MF_00578"/>
    </source>
</evidence>
<feature type="chain" id="PRO_0000192533" description="Glutamate--cysteine ligase">
    <location>
        <begin position="1"/>
        <end position="525"/>
    </location>
</feature>
<protein>
    <recommendedName>
        <fullName evidence="1">Glutamate--cysteine ligase</fullName>
        <ecNumber evidence="1">6.3.2.2</ecNumber>
    </recommendedName>
    <alternativeName>
        <fullName evidence="1">Gamma-ECS</fullName>
        <shortName evidence="1">GCS</shortName>
    </alternativeName>
    <alternativeName>
        <fullName evidence="1">Gamma-glutamylcysteine synthetase</fullName>
    </alternativeName>
</protein>